<feature type="chain" id="PRO_0000063572" description="Chaperonin GroEL 1">
    <location>
        <begin position="1"/>
        <end position="545"/>
    </location>
</feature>
<feature type="region of interest" description="Disordered" evidence="2">
    <location>
        <begin position="525"/>
        <end position="545"/>
    </location>
</feature>
<feature type="compositionally biased region" description="Gly residues" evidence="2">
    <location>
        <begin position="535"/>
        <end position="545"/>
    </location>
</feature>
<feature type="binding site" evidence="1">
    <location>
        <begin position="29"/>
        <end position="32"/>
    </location>
    <ligand>
        <name>ATP</name>
        <dbReference type="ChEBI" id="CHEBI:30616"/>
    </ligand>
</feature>
<feature type="binding site" evidence="1">
    <location>
        <begin position="86"/>
        <end position="90"/>
    </location>
    <ligand>
        <name>ATP</name>
        <dbReference type="ChEBI" id="CHEBI:30616"/>
    </ligand>
</feature>
<feature type="binding site" evidence="1">
    <location>
        <position position="413"/>
    </location>
    <ligand>
        <name>ATP</name>
        <dbReference type="ChEBI" id="CHEBI:30616"/>
    </ligand>
</feature>
<feature type="binding site" evidence="1">
    <location>
        <begin position="479"/>
        <end position="481"/>
    </location>
    <ligand>
        <name>ATP</name>
        <dbReference type="ChEBI" id="CHEBI:30616"/>
    </ligand>
</feature>
<feature type="binding site" evidence="1">
    <location>
        <position position="495"/>
    </location>
    <ligand>
        <name>ATP</name>
        <dbReference type="ChEBI" id="CHEBI:30616"/>
    </ligand>
</feature>
<sequence length="545" mass="58268">MAKRIIYNENARRALEKGMDILAESVAVTLGPKGRNVVLEKKFGAPQIVNDGVTIAKEIELEDHIENTGVALIRQAASKTNDAAGDGTTTATVLAHAMVKEGLRNVAAGANPIALKRGIDKATQFLVEKIAEHARPVEDSKAIAQVAAISAGNDEEVGRMIADAMDKVGKEGVISLEEAKSMTTELEVTEGMRFDKGYISPYFATDTERMEAVLDEPFVLVTDKKITLVQDLVPILEQVARAGKPLVIIAEDIEKEALATLVVNRLRGVLNVAAVKAPGFGDRSKAMLEDIAVLTAGQVIAEDAGLKLENAKLDMLGKARRITITKDHTTIVAEGNEKAVKARCEQIRRQIEETDSSYDKEKLQERLAKLAGGVAVIKVGAATETEMKDRKLRLEDAINATKAAVEEGIVPGGGTTLVHLAPELSNWAAEHLTGEELIGANIVERALSAPLRRIAENAGQNGAIIVERVKEKPFDVGYDAAKDEYVNMFDAGIVDPAKVTRSALQNAASIAGMVLTTECIIVDKPEPKENNPAGSGAGMGGDFDY</sequence>
<proteinExistence type="inferred from homology"/>
<keyword id="KW-0067">ATP-binding</keyword>
<keyword id="KW-0143">Chaperone</keyword>
<keyword id="KW-0963">Cytoplasm</keyword>
<keyword id="KW-0413">Isomerase</keyword>
<keyword id="KW-0547">Nucleotide-binding</keyword>
<dbReference type="EC" id="5.6.1.7" evidence="1"/>
<dbReference type="EMBL" id="D78139">
    <property type="protein sequence ID" value="BAA23817.1"/>
    <property type="molecule type" value="Genomic_DNA"/>
</dbReference>
<dbReference type="SMR" id="O50323"/>
<dbReference type="GO" id="GO:0005737">
    <property type="term" value="C:cytoplasm"/>
    <property type="evidence" value="ECO:0007669"/>
    <property type="project" value="UniProtKB-SubCell"/>
</dbReference>
<dbReference type="GO" id="GO:0005524">
    <property type="term" value="F:ATP binding"/>
    <property type="evidence" value="ECO:0007669"/>
    <property type="project" value="UniProtKB-UniRule"/>
</dbReference>
<dbReference type="GO" id="GO:0140662">
    <property type="term" value="F:ATP-dependent protein folding chaperone"/>
    <property type="evidence" value="ECO:0007669"/>
    <property type="project" value="InterPro"/>
</dbReference>
<dbReference type="GO" id="GO:0016853">
    <property type="term" value="F:isomerase activity"/>
    <property type="evidence" value="ECO:0007669"/>
    <property type="project" value="UniProtKB-KW"/>
</dbReference>
<dbReference type="GO" id="GO:0051082">
    <property type="term" value="F:unfolded protein binding"/>
    <property type="evidence" value="ECO:0007669"/>
    <property type="project" value="UniProtKB-UniRule"/>
</dbReference>
<dbReference type="GO" id="GO:0042026">
    <property type="term" value="P:protein refolding"/>
    <property type="evidence" value="ECO:0007669"/>
    <property type="project" value="UniProtKB-UniRule"/>
</dbReference>
<dbReference type="CDD" id="cd03344">
    <property type="entry name" value="GroEL"/>
    <property type="match status" value="1"/>
</dbReference>
<dbReference type="FunFam" id="3.50.7.10:FF:000001">
    <property type="entry name" value="60 kDa chaperonin"/>
    <property type="match status" value="1"/>
</dbReference>
<dbReference type="Gene3D" id="3.50.7.10">
    <property type="entry name" value="GroEL"/>
    <property type="match status" value="1"/>
</dbReference>
<dbReference type="Gene3D" id="1.10.560.10">
    <property type="entry name" value="GroEL-like equatorial domain"/>
    <property type="match status" value="1"/>
</dbReference>
<dbReference type="Gene3D" id="3.30.260.10">
    <property type="entry name" value="TCP-1-like chaperonin intermediate domain"/>
    <property type="match status" value="1"/>
</dbReference>
<dbReference type="HAMAP" id="MF_00600">
    <property type="entry name" value="CH60"/>
    <property type="match status" value="1"/>
</dbReference>
<dbReference type="InterPro" id="IPR018370">
    <property type="entry name" value="Chaperonin_Cpn60_CS"/>
</dbReference>
<dbReference type="InterPro" id="IPR001844">
    <property type="entry name" value="Cpn60/GroEL"/>
</dbReference>
<dbReference type="InterPro" id="IPR002423">
    <property type="entry name" value="Cpn60/GroEL/TCP-1"/>
</dbReference>
<dbReference type="InterPro" id="IPR027409">
    <property type="entry name" value="GroEL-like_apical_dom_sf"/>
</dbReference>
<dbReference type="InterPro" id="IPR027413">
    <property type="entry name" value="GROEL-like_equatorial_sf"/>
</dbReference>
<dbReference type="InterPro" id="IPR027410">
    <property type="entry name" value="TCP-1-like_intermed_sf"/>
</dbReference>
<dbReference type="NCBIfam" id="TIGR02348">
    <property type="entry name" value="GroEL"/>
    <property type="match status" value="1"/>
</dbReference>
<dbReference type="NCBIfam" id="NF000592">
    <property type="entry name" value="PRK00013.1"/>
    <property type="match status" value="1"/>
</dbReference>
<dbReference type="NCBIfam" id="NF009487">
    <property type="entry name" value="PRK12849.1"/>
    <property type="match status" value="1"/>
</dbReference>
<dbReference type="NCBIfam" id="NF009488">
    <property type="entry name" value="PRK12850.1"/>
    <property type="match status" value="1"/>
</dbReference>
<dbReference type="NCBIfam" id="NF009489">
    <property type="entry name" value="PRK12851.1"/>
    <property type="match status" value="1"/>
</dbReference>
<dbReference type="PANTHER" id="PTHR45633">
    <property type="entry name" value="60 KDA HEAT SHOCK PROTEIN, MITOCHONDRIAL"/>
    <property type="match status" value="1"/>
</dbReference>
<dbReference type="Pfam" id="PF00118">
    <property type="entry name" value="Cpn60_TCP1"/>
    <property type="match status" value="1"/>
</dbReference>
<dbReference type="PRINTS" id="PR00298">
    <property type="entry name" value="CHAPERONIN60"/>
</dbReference>
<dbReference type="SUPFAM" id="SSF52029">
    <property type="entry name" value="GroEL apical domain-like"/>
    <property type="match status" value="1"/>
</dbReference>
<dbReference type="SUPFAM" id="SSF48592">
    <property type="entry name" value="GroEL equatorial domain-like"/>
    <property type="match status" value="2"/>
</dbReference>
<dbReference type="PROSITE" id="PS00296">
    <property type="entry name" value="CHAPERONINS_CPN60"/>
    <property type="match status" value="1"/>
</dbReference>
<organism>
    <name type="scientific">Thermostichus vulcanus</name>
    <name type="common">Synechococcus vulcanus</name>
    <dbReference type="NCBI Taxonomy" id="32053"/>
    <lineage>
        <taxon>Bacteria</taxon>
        <taxon>Bacillati</taxon>
        <taxon>Cyanobacteriota</taxon>
        <taxon>Cyanophyceae</taxon>
        <taxon>Thermostichales</taxon>
        <taxon>Thermostichaceae</taxon>
        <taxon>Thermostichus</taxon>
    </lineage>
</organism>
<protein>
    <recommendedName>
        <fullName evidence="1">Chaperonin GroEL 1</fullName>
        <ecNumber evidence="1">5.6.1.7</ecNumber>
    </recommendedName>
    <alternativeName>
        <fullName evidence="1">60 kDa chaperonin 1</fullName>
    </alternativeName>
    <alternativeName>
        <fullName evidence="1">Chaperonin-60 1</fullName>
        <shortName evidence="1">Cpn60 1</shortName>
    </alternativeName>
</protein>
<reference key="1">
    <citation type="journal article" date="1997" name="Biochim. Biophys. Acta">
        <title>Cloning, characterization and functional analysis of groESL operon from thermophilic cyanobacterium Synechococcus vulcanus.</title>
        <authorList>
            <person name="Tanaka N."/>
            <person name="Hiyama T."/>
            <person name="Nakamoto H."/>
        </authorList>
    </citation>
    <scope>NUCLEOTIDE SEQUENCE [GENOMIC DNA]</scope>
</reference>
<comment type="function">
    <text evidence="1">Together with its co-chaperonin GroES, plays an essential role in assisting protein folding. The GroEL-GroES system forms a nano-cage that allows encapsulation of the non-native substrate proteins and provides a physical environment optimized to promote and accelerate protein folding.</text>
</comment>
<comment type="catalytic activity">
    <reaction evidence="1">
        <text>ATP + H2O + a folded polypeptide = ADP + phosphate + an unfolded polypeptide.</text>
        <dbReference type="EC" id="5.6.1.7"/>
    </reaction>
</comment>
<comment type="subunit">
    <text evidence="1">Forms a cylinder of 14 subunits composed of two heptameric rings stacked back-to-back. Interacts with the co-chaperonin GroES.</text>
</comment>
<comment type="subcellular location">
    <subcellularLocation>
        <location evidence="1">Cytoplasm</location>
    </subcellularLocation>
</comment>
<comment type="similarity">
    <text evidence="1">Belongs to the chaperonin (HSP60) family.</text>
</comment>
<gene>
    <name evidence="1" type="primary">groEL1</name>
    <name evidence="1" type="synonym">groL1</name>
</gene>
<evidence type="ECO:0000255" key="1">
    <source>
        <dbReference type="HAMAP-Rule" id="MF_00600"/>
    </source>
</evidence>
<evidence type="ECO:0000256" key="2">
    <source>
        <dbReference type="SAM" id="MobiDB-lite"/>
    </source>
</evidence>
<accession>O50323</accession>
<name>CH601_THEVL</name>